<proteinExistence type="inferred from homology"/>
<organism>
    <name type="scientific">Escherichia coli (strain 55989 / EAEC)</name>
    <dbReference type="NCBI Taxonomy" id="585055"/>
    <lineage>
        <taxon>Bacteria</taxon>
        <taxon>Pseudomonadati</taxon>
        <taxon>Pseudomonadota</taxon>
        <taxon>Gammaproteobacteria</taxon>
        <taxon>Enterobacterales</taxon>
        <taxon>Enterobacteriaceae</taxon>
        <taxon>Escherichia</taxon>
    </lineage>
</organism>
<sequence>MERIVVTLGERSYPITIASGLFNEPASFLPLKSGEQVMLVTNETLAPLYLDKVRGVLEQAGVNVDSVILPDGEQYKSLAVLDTVFTALLQKPHGRDTTLVALGGGVVGDLTGFAAASYQRGVRFIQVPTTLLSQVDSSVGGKTAVNHPLGKNMIGAFYQPASVVVDLDCLKTLPPRELASGLAEVIKYGIILDGAFFNWLEENLDALLRLDGPAMAYCIRRCCELKAEVVAADERETGLRALLNLGHTFGHAIEAEMGYGNWLHGEAVAAGMVMAARTSERLGQFSSAETQRIITLLKRAGLPVNGPREMSAQAYLPHMLRDKKVLAGEIRLILPLAIGKSEVRSGVSHELVLNAIADCQSA</sequence>
<protein>
    <recommendedName>
        <fullName evidence="1">3-dehydroquinate synthase</fullName>
        <shortName evidence="1">DHQS</shortName>
        <ecNumber evidence="1">4.2.3.4</ecNumber>
    </recommendedName>
</protein>
<reference key="1">
    <citation type="journal article" date="2009" name="PLoS Genet.">
        <title>Organised genome dynamics in the Escherichia coli species results in highly diverse adaptive paths.</title>
        <authorList>
            <person name="Touchon M."/>
            <person name="Hoede C."/>
            <person name="Tenaillon O."/>
            <person name="Barbe V."/>
            <person name="Baeriswyl S."/>
            <person name="Bidet P."/>
            <person name="Bingen E."/>
            <person name="Bonacorsi S."/>
            <person name="Bouchier C."/>
            <person name="Bouvet O."/>
            <person name="Calteau A."/>
            <person name="Chiapello H."/>
            <person name="Clermont O."/>
            <person name="Cruveiller S."/>
            <person name="Danchin A."/>
            <person name="Diard M."/>
            <person name="Dossat C."/>
            <person name="Karoui M.E."/>
            <person name="Frapy E."/>
            <person name="Garry L."/>
            <person name="Ghigo J.M."/>
            <person name="Gilles A.M."/>
            <person name="Johnson J."/>
            <person name="Le Bouguenec C."/>
            <person name="Lescat M."/>
            <person name="Mangenot S."/>
            <person name="Martinez-Jehanne V."/>
            <person name="Matic I."/>
            <person name="Nassif X."/>
            <person name="Oztas S."/>
            <person name="Petit M.A."/>
            <person name="Pichon C."/>
            <person name="Rouy Z."/>
            <person name="Ruf C.S."/>
            <person name="Schneider D."/>
            <person name="Tourret J."/>
            <person name="Vacherie B."/>
            <person name="Vallenet D."/>
            <person name="Medigue C."/>
            <person name="Rocha E.P.C."/>
            <person name="Denamur E."/>
        </authorList>
    </citation>
    <scope>NUCLEOTIDE SEQUENCE [LARGE SCALE GENOMIC DNA]</scope>
    <source>
        <strain>55989 / EAEC</strain>
    </source>
</reference>
<name>AROB_ECO55</name>
<gene>
    <name evidence="1" type="primary">aroB</name>
    <name type="ordered locus">EC55989_3794</name>
</gene>
<evidence type="ECO:0000255" key="1">
    <source>
        <dbReference type="HAMAP-Rule" id="MF_00110"/>
    </source>
</evidence>
<feature type="chain" id="PRO_1000119081" description="3-dehydroquinate synthase">
    <location>
        <begin position="1"/>
        <end position="362"/>
    </location>
</feature>
<feature type="binding site" evidence="1">
    <location>
        <begin position="71"/>
        <end position="76"/>
    </location>
    <ligand>
        <name>NAD(+)</name>
        <dbReference type="ChEBI" id="CHEBI:57540"/>
    </ligand>
</feature>
<feature type="binding site" evidence="1">
    <location>
        <begin position="105"/>
        <end position="109"/>
    </location>
    <ligand>
        <name>NAD(+)</name>
        <dbReference type="ChEBI" id="CHEBI:57540"/>
    </ligand>
</feature>
<feature type="binding site" evidence="1">
    <location>
        <begin position="129"/>
        <end position="130"/>
    </location>
    <ligand>
        <name>NAD(+)</name>
        <dbReference type="ChEBI" id="CHEBI:57540"/>
    </ligand>
</feature>
<feature type="binding site" evidence="1">
    <location>
        <position position="142"/>
    </location>
    <ligand>
        <name>NAD(+)</name>
        <dbReference type="ChEBI" id="CHEBI:57540"/>
    </ligand>
</feature>
<feature type="binding site" evidence="1">
    <location>
        <position position="151"/>
    </location>
    <ligand>
        <name>NAD(+)</name>
        <dbReference type="ChEBI" id="CHEBI:57540"/>
    </ligand>
</feature>
<feature type="binding site" evidence="1">
    <location>
        <begin position="169"/>
        <end position="172"/>
    </location>
    <ligand>
        <name>NAD(+)</name>
        <dbReference type="ChEBI" id="CHEBI:57540"/>
    </ligand>
</feature>
<feature type="binding site" evidence="1">
    <location>
        <position position="184"/>
    </location>
    <ligand>
        <name>Zn(2+)</name>
        <dbReference type="ChEBI" id="CHEBI:29105"/>
    </ligand>
</feature>
<feature type="binding site" evidence="1">
    <location>
        <position position="247"/>
    </location>
    <ligand>
        <name>Zn(2+)</name>
        <dbReference type="ChEBI" id="CHEBI:29105"/>
    </ligand>
</feature>
<feature type="binding site" evidence="1">
    <location>
        <position position="264"/>
    </location>
    <ligand>
        <name>Zn(2+)</name>
        <dbReference type="ChEBI" id="CHEBI:29105"/>
    </ligand>
</feature>
<dbReference type="EC" id="4.2.3.4" evidence="1"/>
<dbReference type="EMBL" id="CU928145">
    <property type="protein sequence ID" value="CAV00138.1"/>
    <property type="molecule type" value="Genomic_DNA"/>
</dbReference>
<dbReference type="RefSeq" id="WP_000439846.1">
    <property type="nucleotide sequence ID" value="NC_011748.1"/>
</dbReference>
<dbReference type="SMR" id="B7L4R5"/>
<dbReference type="GeneID" id="93778609"/>
<dbReference type="KEGG" id="eck:EC55989_3794"/>
<dbReference type="HOGENOM" id="CLU_001201_0_2_6"/>
<dbReference type="UniPathway" id="UPA00053">
    <property type="reaction ID" value="UER00085"/>
</dbReference>
<dbReference type="Proteomes" id="UP000000746">
    <property type="component" value="Chromosome"/>
</dbReference>
<dbReference type="GO" id="GO:0005737">
    <property type="term" value="C:cytoplasm"/>
    <property type="evidence" value="ECO:0007669"/>
    <property type="project" value="UniProtKB-SubCell"/>
</dbReference>
<dbReference type="GO" id="GO:0003856">
    <property type="term" value="F:3-dehydroquinate synthase activity"/>
    <property type="evidence" value="ECO:0007669"/>
    <property type="project" value="UniProtKB-UniRule"/>
</dbReference>
<dbReference type="GO" id="GO:0046872">
    <property type="term" value="F:metal ion binding"/>
    <property type="evidence" value="ECO:0007669"/>
    <property type="project" value="UniProtKB-KW"/>
</dbReference>
<dbReference type="GO" id="GO:0000166">
    <property type="term" value="F:nucleotide binding"/>
    <property type="evidence" value="ECO:0007669"/>
    <property type="project" value="UniProtKB-KW"/>
</dbReference>
<dbReference type="GO" id="GO:0008652">
    <property type="term" value="P:amino acid biosynthetic process"/>
    <property type="evidence" value="ECO:0007669"/>
    <property type="project" value="UniProtKB-KW"/>
</dbReference>
<dbReference type="GO" id="GO:0009073">
    <property type="term" value="P:aromatic amino acid family biosynthetic process"/>
    <property type="evidence" value="ECO:0007669"/>
    <property type="project" value="UniProtKB-KW"/>
</dbReference>
<dbReference type="GO" id="GO:0009423">
    <property type="term" value="P:chorismate biosynthetic process"/>
    <property type="evidence" value="ECO:0007669"/>
    <property type="project" value="UniProtKB-UniRule"/>
</dbReference>
<dbReference type="CDD" id="cd08195">
    <property type="entry name" value="DHQS"/>
    <property type="match status" value="1"/>
</dbReference>
<dbReference type="FunFam" id="1.20.1090.10:FF:000002">
    <property type="entry name" value="3-dehydroquinate synthase"/>
    <property type="match status" value="1"/>
</dbReference>
<dbReference type="FunFam" id="3.40.50.1970:FF:000001">
    <property type="entry name" value="3-dehydroquinate synthase"/>
    <property type="match status" value="1"/>
</dbReference>
<dbReference type="Gene3D" id="3.40.50.1970">
    <property type="match status" value="1"/>
</dbReference>
<dbReference type="Gene3D" id="1.20.1090.10">
    <property type="entry name" value="Dehydroquinate synthase-like - alpha domain"/>
    <property type="match status" value="1"/>
</dbReference>
<dbReference type="HAMAP" id="MF_00110">
    <property type="entry name" value="DHQ_synthase"/>
    <property type="match status" value="1"/>
</dbReference>
<dbReference type="InterPro" id="IPR050071">
    <property type="entry name" value="Dehydroquinate_synthase"/>
</dbReference>
<dbReference type="InterPro" id="IPR016037">
    <property type="entry name" value="DHQ_synth_AroB"/>
</dbReference>
<dbReference type="InterPro" id="IPR030963">
    <property type="entry name" value="DHQ_synth_fam"/>
</dbReference>
<dbReference type="InterPro" id="IPR030960">
    <property type="entry name" value="DHQS/DOIS_N"/>
</dbReference>
<dbReference type="InterPro" id="IPR056179">
    <property type="entry name" value="DHQS_C"/>
</dbReference>
<dbReference type="NCBIfam" id="TIGR01357">
    <property type="entry name" value="aroB"/>
    <property type="match status" value="1"/>
</dbReference>
<dbReference type="PANTHER" id="PTHR43622">
    <property type="entry name" value="3-DEHYDROQUINATE SYNTHASE"/>
    <property type="match status" value="1"/>
</dbReference>
<dbReference type="PANTHER" id="PTHR43622:SF7">
    <property type="entry name" value="3-DEHYDROQUINATE SYNTHASE, CHLOROPLASTIC"/>
    <property type="match status" value="1"/>
</dbReference>
<dbReference type="Pfam" id="PF01761">
    <property type="entry name" value="DHQ_synthase"/>
    <property type="match status" value="1"/>
</dbReference>
<dbReference type="Pfam" id="PF24621">
    <property type="entry name" value="DHQS_C"/>
    <property type="match status" value="1"/>
</dbReference>
<dbReference type="PIRSF" id="PIRSF001455">
    <property type="entry name" value="DHQ_synth"/>
    <property type="match status" value="1"/>
</dbReference>
<dbReference type="SUPFAM" id="SSF56796">
    <property type="entry name" value="Dehydroquinate synthase-like"/>
    <property type="match status" value="1"/>
</dbReference>
<keyword id="KW-0028">Amino-acid biosynthesis</keyword>
<keyword id="KW-0057">Aromatic amino acid biosynthesis</keyword>
<keyword id="KW-0170">Cobalt</keyword>
<keyword id="KW-0963">Cytoplasm</keyword>
<keyword id="KW-0456">Lyase</keyword>
<keyword id="KW-0479">Metal-binding</keyword>
<keyword id="KW-0520">NAD</keyword>
<keyword id="KW-0547">Nucleotide-binding</keyword>
<keyword id="KW-1185">Reference proteome</keyword>
<keyword id="KW-0862">Zinc</keyword>
<accession>B7L4R5</accession>
<comment type="function">
    <text evidence="1">Catalyzes the conversion of 3-deoxy-D-arabino-heptulosonate 7-phosphate (DAHP) to dehydroquinate (DHQ).</text>
</comment>
<comment type="catalytic activity">
    <reaction evidence="1">
        <text>7-phospho-2-dehydro-3-deoxy-D-arabino-heptonate = 3-dehydroquinate + phosphate</text>
        <dbReference type="Rhea" id="RHEA:21968"/>
        <dbReference type="ChEBI" id="CHEBI:32364"/>
        <dbReference type="ChEBI" id="CHEBI:43474"/>
        <dbReference type="ChEBI" id="CHEBI:58394"/>
        <dbReference type="EC" id="4.2.3.4"/>
    </reaction>
</comment>
<comment type="cofactor">
    <cofactor evidence="1">
        <name>Co(2+)</name>
        <dbReference type="ChEBI" id="CHEBI:48828"/>
    </cofactor>
    <cofactor evidence="1">
        <name>Zn(2+)</name>
        <dbReference type="ChEBI" id="CHEBI:29105"/>
    </cofactor>
    <text evidence="1">Binds 1 divalent metal cation per subunit. Can use either Co(2+) or Zn(2+).</text>
</comment>
<comment type="cofactor">
    <cofactor evidence="1">
        <name>NAD(+)</name>
        <dbReference type="ChEBI" id="CHEBI:57540"/>
    </cofactor>
</comment>
<comment type="pathway">
    <text evidence="1">Metabolic intermediate biosynthesis; chorismate biosynthesis; chorismate from D-erythrose 4-phosphate and phosphoenolpyruvate: step 2/7.</text>
</comment>
<comment type="subcellular location">
    <subcellularLocation>
        <location evidence="1">Cytoplasm</location>
    </subcellularLocation>
</comment>
<comment type="similarity">
    <text evidence="1">Belongs to the sugar phosphate cyclases superfamily. Dehydroquinate synthase family.</text>
</comment>